<gene>
    <name evidence="1" type="primary">prfA</name>
    <name type="ordered locus">LSL_0590</name>
</gene>
<organism>
    <name type="scientific">Ligilactobacillus salivarius (strain UCC118)</name>
    <name type="common">Lactobacillus salivarius</name>
    <dbReference type="NCBI Taxonomy" id="362948"/>
    <lineage>
        <taxon>Bacteria</taxon>
        <taxon>Bacillati</taxon>
        <taxon>Bacillota</taxon>
        <taxon>Bacilli</taxon>
        <taxon>Lactobacillales</taxon>
        <taxon>Lactobacillaceae</taxon>
        <taxon>Ligilactobacillus</taxon>
    </lineage>
</organism>
<name>RF1_LIGS1</name>
<accession>Q1WUD6</accession>
<reference key="1">
    <citation type="journal article" date="2006" name="Proc. Natl. Acad. Sci. U.S.A.">
        <title>Multireplicon genome architecture of Lactobacillus salivarius.</title>
        <authorList>
            <person name="Claesson M.J."/>
            <person name="Li Y."/>
            <person name="Leahy S."/>
            <person name="Canchaya C."/>
            <person name="van Pijkeren J.P."/>
            <person name="Cerdeno-Tarraga A.M."/>
            <person name="Parkhill J."/>
            <person name="Flynn S."/>
            <person name="O'Sullivan G.C."/>
            <person name="Collins J.K."/>
            <person name="Higgins D."/>
            <person name="Shanahan F."/>
            <person name="Fitzgerald G.F."/>
            <person name="van Sinderen D."/>
            <person name="O'Toole P.W."/>
        </authorList>
    </citation>
    <scope>NUCLEOTIDE SEQUENCE [LARGE SCALE GENOMIC DNA]</scope>
    <source>
        <strain>UCC118</strain>
    </source>
</reference>
<evidence type="ECO:0000255" key="1">
    <source>
        <dbReference type="HAMAP-Rule" id="MF_00093"/>
    </source>
</evidence>
<proteinExistence type="inferred from homology"/>
<sequence>MDKLFDRLQMLEDRYEELGELLSDPDVISDTKRFTKLSKEMADLRETVEKYNKYKEVTQQISDDEEMLSDGLDDEMASLVKEELSNAKNEKVKLEEEIKILLLPKDPNDDKNIIMEIRGAAGGDEASLFAADLFSMYSKYAERQGWSIEVIDKNVTEVGGFKEIALIINGNSVWSKLKYESGAHRVQRIPVTESAGRVHTSTATVVVMPEEEDVEIELDPKDIRVDVYRSSGAGGQHINKTSSAVRMTHLPTGIVVAMQDQRSQQQNREKAMKILKARVYDYYAQQEQSEYDANRKSAVGTGDRSERIRTYNYPQNRVTDHRIGLSLNKLDRIMNGELEDVIDALVLFEQTKAMEKLENE</sequence>
<comment type="function">
    <text evidence="1">Peptide chain release factor 1 directs the termination of translation in response to the peptide chain termination codons UAG and UAA.</text>
</comment>
<comment type="subcellular location">
    <subcellularLocation>
        <location evidence="1">Cytoplasm</location>
    </subcellularLocation>
</comment>
<comment type="PTM">
    <text evidence="1">Methylated by PrmC. Methylation increases the termination efficiency of RF1.</text>
</comment>
<comment type="similarity">
    <text evidence="1">Belongs to the prokaryotic/mitochondrial release factor family.</text>
</comment>
<protein>
    <recommendedName>
        <fullName evidence="1">Peptide chain release factor 1</fullName>
        <shortName evidence="1">RF-1</shortName>
    </recommendedName>
</protein>
<keyword id="KW-0963">Cytoplasm</keyword>
<keyword id="KW-0488">Methylation</keyword>
<keyword id="KW-0648">Protein biosynthesis</keyword>
<keyword id="KW-1185">Reference proteome</keyword>
<feature type="chain" id="PRO_0000263291" description="Peptide chain release factor 1">
    <location>
        <begin position="1"/>
        <end position="360"/>
    </location>
</feature>
<feature type="modified residue" description="N5-methylglutamine" evidence="1">
    <location>
        <position position="236"/>
    </location>
</feature>
<dbReference type="EMBL" id="CP000233">
    <property type="protein sequence ID" value="ABD99399.1"/>
    <property type="molecule type" value="Genomic_DNA"/>
</dbReference>
<dbReference type="RefSeq" id="WP_011475834.1">
    <property type="nucleotide sequence ID" value="NC_007929.1"/>
</dbReference>
<dbReference type="RefSeq" id="YP_535482.1">
    <property type="nucleotide sequence ID" value="NC_007929.1"/>
</dbReference>
<dbReference type="SMR" id="Q1WUD6"/>
<dbReference type="STRING" id="362948.LSL_0590"/>
<dbReference type="KEGG" id="lsl:LSL_0590"/>
<dbReference type="PATRIC" id="fig|362948.14.peg.669"/>
<dbReference type="HOGENOM" id="CLU_036856_0_1_9"/>
<dbReference type="OrthoDB" id="9806673at2"/>
<dbReference type="Proteomes" id="UP000006559">
    <property type="component" value="Chromosome"/>
</dbReference>
<dbReference type="GO" id="GO:0005737">
    <property type="term" value="C:cytoplasm"/>
    <property type="evidence" value="ECO:0007669"/>
    <property type="project" value="UniProtKB-SubCell"/>
</dbReference>
<dbReference type="GO" id="GO:0016149">
    <property type="term" value="F:translation release factor activity, codon specific"/>
    <property type="evidence" value="ECO:0007669"/>
    <property type="project" value="UniProtKB-UniRule"/>
</dbReference>
<dbReference type="FunFam" id="3.30.160.20:FF:000004">
    <property type="entry name" value="Peptide chain release factor 1"/>
    <property type="match status" value="1"/>
</dbReference>
<dbReference type="FunFam" id="3.30.70.1660:FF:000002">
    <property type="entry name" value="Peptide chain release factor 1"/>
    <property type="match status" value="1"/>
</dbReference>
<dbReference type="FunFam" id="3.30.70.1660:FF:000004">
    <property type="entry name" value="Peptide chain release factor 1"/>
    <property type="match status" value="1"/>
</dbReference>
<dbReference type="Gene3D" id="3.30.160.20">
    <property type="match status" value="1"/>
</dbReference>
<dbReference type="Gene3D" id="3.30.70.1660">
    <property type="match status" value="2"/>
</dbReference>
<dbReference type="Gene3D" id="6.10.140.1950">
    <property type="match status" value="1"/>
</dbReference>
<dbReference type="HAMAP" id="MF_00093">
    <property type="entry name" value="Rel_fac_1"/>
    <property type="match status" value="1"/>
</dbReference>
<dbReference type="InterPro" id="IPR005139">
    <property type="entry name" value="PCRF"/>
</dbReference>
<dbReference type="InterPro" id="IPR000352">
    <property type="entry name" value="Pep_chain_release_fac_I"/>
</dbReference>
<dbReference type="InterPro" id="IPR045853">
    <property type="entry name" value="Pep_chain_release_fac_I_sf"/>
</dbReference>
<dbReference type="InterPro" id="IPR050057">
    <property type="entry name" value="Prokaryotic/Mito_RF"/>
</dbReference>
<dbReference type="InterPro" id="IPR004373">
    <property type="entry name" value="RF-1"/>
</dbReference>
<dbReference type="NCBIfam" id="TIGR00019">
    <property type="entry name" value="prfA"/>
    <property type="match status" value="1"/>
</dbReference>
<dbReference type="NCBIfam" id="NF001859">
    <property type="entry name" value="PRK00591.1"/>
    <property type="match status" value="1"/>
</dbReference>
<dbReference type="PANTHER" id="PTHR43804">
    <property type="entry name" value="LD18447P"/>
    <property type="match status" value="1"/>
</dbReference>
<dbReference type="PANTHER" id="PTHR43804:SF7">
    <property type="entry name" value="LD18447P"/>
    <property type="match status" value="1"/>
</dbReference>
<dbReference type="Pfam" id="PF03462">
    <property type="entry name" value="PCRF"/>
    <property type="match status" value="1"/>
</dbReference>
<dbReference type="Pfam" id="PF00472">
    <property type="entry name" value="RF-1"/>
    <property type="match status" value="1"/>
</dbReference>
<dbReference type="SMART" id="SM00937">
    <property type="entry name" value="PCRF"/>
    <property type="match status" value="1"/>
</dbReference>
<dbReference type="SUPFAM" id="SSF75620">
    <property type="entry name" value="Release factor"/>
    <property type="match status" value="1"/>
</dbReference>
<dbReference type="PROSITE" id="PS00745">
    <property type="entry name" value="RF_PROK_I"/>
    <property type="match status" value="1"/>
</dbReference>